<organism>
    <name type="scientific">Homo sapiens</name>
    <name type="common">Human</name>
    <dbReference type="NCBI Taxonomy" id="9606"/>
    <lineage>
        <taxon>Eukaryota</taxon>
        <taxon>Metazoa</taxon>
        <taxon>Chordata</taxon>
        <taxon>Craniata</taxon>
        <taxon>Vertebrata</taxon>
        <taxon>Euteleostomi</taxon>
        <taxon>Mammalia</taxon>
        <taxon>Eutheria</taxon>
        <taxon>Euarchontoglires</taxon>
        <taxon>Primates</taxon>
        <taxon>Haplorrhini</taxon>
        <taxon>Catarrhini</taxon>
        <taxon>Hominidae</taxon>
        <taxon>Homo</taxon>
    </lineage>
</organism>
<name>KDM5C_HUMAN</name>
<accession>P41229</accession>
<accession>B0QZ44</accession>
<accession>B4E3I2</accession>
<accession>F5H3T1</accession>
<accession>Q5JUX3</accession>
<accession>Q5JUX4</accession>
<accession>Q5JUX5</accession>
<accession>Q7Z5S5</accession>
<proteinExistence type="evidence at protein level"/>
<gene>
    <name evidence="26" type="primary">KDM5C</name>
    <name type="synonym">DXS1272E</name>
    <name evidence="23" type="synonym">JARID1C</name>
    <name evidence="23" type="synonym">SMCX</name>
    <name type="synonym">XE169</name>
</gene>
<protein>
    <recommendedName>
        <fullName>Lysine-specific demethylase 5C</fullName>
        <ecNumber evidence="17">1.14.11.67</ecNumber>
    </recommendedName>
    <alternativeName>
        <fullName>Histone demethylase JARID1C</fullName>
    </alternativeName>
    <alternativeName>
        <fullName evidence="23">Jumonji/ARID domain-containing protein 1C</fullName>
    </alternativeName>
    <alternativeName>
        <fullName evidence="23">Protein SmcX</fullName>
    </alternativeName>
    <alternativeName>
        <fullName>Protein Xe169</fullName>
    </alternativeName>
    <alternativeName>
        <fullName evidence="24">[histone H3]-trimethyl-L-lysine(4) demethylase 5C</fullName>
    </alternativeName>
</protein>
<comment type="function">
    <text evidence="2 11 12 13 17 19">Histone demethylase that specifically demethylates 'Lys-4' of histone H3, thereby playing a central role in histone code (PubMed:28262558). Does not demethylate histone H3 'Lys-9', H3 'Lys-27', H3 'Lys-36', H3 'Lys-79' or H4 'Lys-20'. Demethylates trimethylated and dimethylated but not monomethylated H3 'Lys-4'. Participates in transcriptional repression of neuronal genes by recruiting histone deacetylases and REST at neuron-restrictive silencer elements. Represses the CLOCK-BMAL1 heterodimer-mediated transcriptional activation of the core clock component PER2 (By similarity).</text>
</comment>
<comment type="catalytic activity">
    <reaction evidence="17">
        <text>N(6),N(6),N(6)-trimethyl-L-lysyl(4)-[histone H3] + 3 2-oxoglutarate + 3 O2 = L-lysyl(4)-[histone H3] + 3 formaldehyde + 3 succinate + 3 CO2</text>
        <dbReference type="Rhea" id="RHEA:60208"/>
        <dbReference type="Rhea" id="RHEA-COMP:15537"/>
        <dbReference type="Rhea" id="RHEA-COMP:15547"/>
        <dbReference type="ChEBI" id="CHEBI:15379"/>
        <dbReference type="ChEBI" id="CHEBI:16526"/>
        <dbReference type="ChEBI" id="CHEBI:16810"/>
        <dbReference type="ChEBI" id="CHEBI:16842"/>
        <dbReference type="ChEBI" id="CHEBI:29969"/>
        <dbReference type="ChEBI" id="CHEBI:30031"/>
        <dbReference type="ChEBI" id="CHEBI:61961"/>
        <dbReference type="EC" id="1.14.11.67"/>
    </reaction>
</comment>
<comment type="cofactor">
    <cofactor evidence="11">
        <name>Fe(2+)</name>
        <dbReference type="ChEBI" id="CHEBI:29033"/>
    </cofactor>
    <text evidence="11">Binds 1 Fe(2+) ion per subunit.</text>
</comment>
<comment type="activity regulation">
    <text evidence="19">The inhibitor KDOAM-25 and others inhibit its demethylase activity, resulting to cell cycle arrest in myeloma cells.</text>
</comment>
<comment type="biophysicochemical properties">
    <kinetics>
        <KM evidence="17">6 uM for 2-oxoglutarate</KM>
        <KM evidence="17">3.3 uM for histone H3K4me3</KM>
        <text evidence="17">kcat is 1.92 min(-1) and 2.71 min(-1) for 2-oxoglutarate and histone H3K4me3, respectively.</text>
    </kinetics>
</comment>
<comment type="subunit">
    <text evidence="13 20">Part of two distinct complexes, one containing E2F6, and the other containing REST (PubMed:17468742). Interacts with ZMYND8 (PubMed:33323928).</text>
</comment>
<comment type="interaction">
    <interactant intactId="EBI-1246541">
        <id>P41229</id>
    </interactant>
    <interactant intactId="EBI-926706">
        <id>Q13127</id>
        <label>REST</label>
    </interactant>
    <organismsDiffer>false</organismsDiffer>
    <experiments>3</experiments>
</comment>
<comment type="interaction">
    <interactant intactId="EBI-1246541">
        <id>P41229</id>
    </interactant>
    <interactant intactId="EBI-7028618">
        <id>P03122</id>
        <label>E2</label>
    </interactant>
    <organismsDiffer>true</organismsDiffer>
    <experiments>2</experiments>
</comment>
<comment type="subcellular location">
    <subcellularLocation>
        <location evidence="4 5 13">Nucleus</location>
    </subcellularLocation>
</comment>
<comment type="alternative products">
    <event type="alternative splicing"/>
    <isoform>
        <id>P41229-1</id>
        <name>1</name>
        <sequence type="displayed"/>
    </isoform>
    <isoform>
        <id>P41229-2</id>
        <name>2</name>
        <sequence type="described" ref="VSP_000315"/>
    </isoform>
    <isoform>
        <id>P41229-3</id>
        <name>3</name>
        <sequence type="described" ref="VSP_026410 VSP_000315"/>
    </isoform>
    <isoform>
        <id>P41229-4</id>
        <name>4</name>
        <sequence type="described" ref="VSP_043752 VSP_026410 VSP_000315 VSP_043753"/>
    </isoform>
    <isoform>
        <id>P41229-5</id>
        <name>5</name>
        <sequence type="described" ref="VSP_053420"/>
    </isoform>
</comment>
<comment type="tissue specificity">
    <text evidence="8">Expressed in all tissues examined. Highest levels found in brain and skeletal muscle.</text>
</comment>
<comment type="domain">
    <text>The first PHD-type zinc finger domain recognizes and binds H3-K9Me3.</text>
</comment>
<comment type="domain">
    <text>Both the JmjC domain and the JmjN domain are required for enzymatic activity.</text>
</comment>
<comment type="disease" evidence="8 9 10 11 13 15 16">
    <disease id="DI-00718">
        <name>Intellectual developmental disorder, X-linked, syndromic, Claes-Jensen type</name>
        <acronym>MRXSCJ</acronym>
        <description>A disorder characterized by significantly below average general intellectual functioning associated with impairments in adaptive behavior and manifested during the developmental period. MRXSCJ patients manifest intellectual disability associated with variable features such as slowly progressive spastic paraplegia, seizures, facial dysmorphism.</description>
        <dbReference type="MIM" id="300534"/>
    </disease>
    <text>The disease is caused by variants affecting the gene represented in this entry.</text>
</comment>
<comment type="miscellaneous">
    <text>Escapes X-inactivation.</text>
</comment>
<comment type="similarity">
    <text evidence="24">Belongs to the JARID1 histone demethylase family.</text>
</comment>
<evidence type="ECO:0000250" key="1">
    <source>
        <dbReference type="UniProtKB" id="P29375"/>
    </source>
</evidence>
<evidence type="ECO:0000250" key="2">
    <source>
        <dbReference type="UniProtKB" id="P41230"/>
    </source>
</evidence>
<evidence type="ECO:0000255" key="3">
    <source>
        <dbReference type="PROSITE-ProRule" id="PRU00146"/>
    </source>
</evidence>
<evidence type="ECO:0000255" key="4">
    <source>
        <dbReference type="PROSITE-ProRule" id="PRU00355"/>
    </source>
</evidence>
<evidence type="ECO:0000255" key="5">
    <source>
        <dbReference type="PROSITE-ProRule" id="PRU00537"/>
    </source>
</evidence>
<evidence type="ECO:0000255" key="6">
    <source>
        <dbReference type="PROSITE-ProRule" id="PRU00538"/>
    </source>
</evidence>
<evidence type="ECO:0000256" key="7">
    <source>
        <dbReference type="SAM" id="MobiDB-lite"/>
    </source>
</evidence>
<evidence type="ECO:0000269" key="8">
    <source>
    </source>
</evidence>
<evidence type="ECO:0000269" key="9">
    <source>
    </source>
</evidence>
<evidence type="ECO:0000269" key="10">
    <source>
    </source>
</evidence>
<evidence type="ECO:0000269" key="11">
    <source>
    </source>
</evidence>
<evidence type="ECO:0000269" key="12">
    <source>
    </source>
</evidence>
<evidence type="ECO:0000269" key="13">
    <source>
    </source>
</evidence>
<evidence type="ECO:0000269" key="14">
    <source>
    </source>
</evidence>
<evidence type="ECO:0000269" key="15">
    <source>
    </source>
</evidence>
<evidence type="ECO:0000269" key="16">
    <source>
    </source>
</evidence>
<evidence type="ECO:0000269" key="17">
    <source>
    </source>
</evidence>
<evidence type="ECO:0000269" key="18">
    <source>
    </source>
</evidence>
<evidence type="ECO:0000269" key="19">
    <source>
    </source>
</evidence>
<evidence type="ECO:0000269" key="20">
    <source>
    </source>
</evidence>
<evidence type="ECO:0000303" key="21">
    <source>
    </source>
</evidence>
<evidence type="ECO:0000303" key="22">
    <source>
    </source>
</evidence>
<evidence type="ECO:0000303" key="23">
    <source>
    </source>
</evidence>
<evidence type="ECO:0000305" key="24"/>
<evidence type="ECO:0000305" key="25">
    <source>
    </source>
</evidence>
<evidence type="ECO:0000312" key="26">
    <source>
        <dbReference type="HGNC" id="HGNC:11114"/>
    </source>
</evidence>
<evidence type="ECO:0007744" key="27">
    <source>
    </source>
</evidence>
<evidence type="ECO:0007744" key="28">
    <source>
    </source>
</evidence>
<evidence type="ECO:0007744" key="29">
    <source>
    </source>
</evidence>
<evidence type="ECO:0007744" key="30">
    <source>
    </source>
</evidence>
<evidence type="ECO:0007744" key="31">
    <source>
    </source>
</evidence>
<evidence type="ECO:0007744" key="32">
    <source>
    </source>
</evidence>
<evidence type="ECO:0007744" key="33">
    <source>
    </source>
</evidence>
<evidence type="ECO:0007829" key="34">
    <source>
        <dbReference type="PDB" id="2JRZ"/>
    </source>
</evidence>
<evidence type="ECO:0007829" key="35">
    <source>
        <dbReference type="PDB" id="5FWJ"/>
    </source>
</evidence>
<keyword id="KW-0002">3D-structure</keyword>
<keyword id="KW-0025">Alternative splicing</keyword>
<keyword id="KW-0090">Biological rhythms</keyword>
<keyword id="KW-0156">Chromatin regulator</keyword>
<keyword id="KW-0223">Dioxygenase</keyword>
<keyword id="KW-0225">Disease variant</keyword>
<keyword id="KW-0991">Intellectual disability</keyword>
<keyword id="KW-0408">Iron</keyword>
<keyword id="KW-1017">Isopeptide bond</keyword>
<keyword id="KW-0479">Metal-binding</keyword>
<keyword id="KW-0539">Nucleus</keyword>
<keyword id="KW-0560">Oxidoreductase</keyword>
<keyword id="KW-0597">Phosphoprotein</keyword>
<keyword id="KW-1267">Proteomics identification</keyword>
<keyword id="KW-1185">Reference proteome</keyword>
<keyword id="KW-0677">Repeat</keyword>
<keyword id="KW-0678">Repressor</keyword>
<keyword id="KW-0804">Transcription</keyword>
<keyword id="KW-0805">Transcription regulation</keyword>
<keyword id="KW-0832">Ubl conjugation</keyword>
<keyword id="KW-0862">Zinc</keyword>
<keyword id="KW-0863">Zinc-finger</keyword>
<reference key="1">
    <citation type="journal article" date="1994" name="Hum. Mol. Genet.">
        <title>Isolation and characterization of XE169, a novel human gene that escapes X-inactivation.</title>
        <authorList>
            <person name="Wu J."/>
            <person name="Ellison J."/>
            <person name="Salido E."/>
            <person name="Yen P."/>
            <person name="Mohandas T."/>
            <person name="Shapiro L.J."/>
        </authorList>
    </citation>
    <scope>NUCLEOTIDE SEQUENCE [MRNA] (ISOFORM 1)</scope>
    <source>
        <tissue>Fibroblast</tissue>
    </source>
</reference>
<reference key="2">
    <citation type="journal article" date="2004" name="Nat. Genet.">
        <title>Complete sequencing and characterization of 21,243 full-length human cDNAs.</title>
        <authorList>
            <person name="Ota T."/>
            <person name="Suzuki Y."/>
            <person name="Nishikawa T."/>
            <person name="Otsuki T."/>
            <person name="Sugiyama T."/>
            <person name="Irie R."/>
            <person name="Wakamatsu A."/>
            <person name="Hayashi K."/>
            <person name="Sato H."/>
            <person name="Nagai K."/>
            <person name="Kimura K."/>
            <person name="Makita H."/>
            <person name="Sekine M."/>
            <person name="Obayashi M."/>
            <person name="Nishi T."/>
            <person name="Shibahara T."/>
            <person name="Tanaka T."/>
            <person name="Ishii S."/>
            <person name="Yamamoto J."/>
            <person name="Saito K."/>
            <person name="Kawai Y."/>
            <person name="Isono Y."/>
            <person name="Nakamura Y."/>
            <person name="Nagahari K."/>
            <person name="Murakami K."/>
            <person name="Yasuda T."/>
            <person name="Iwayanagi T."/>
            <person name="Wagatsuma M."/>
            <person name="Shiratori A."/>
            <person name="Sudo H."/>
            <person name="Hosoiri T."/>
            <person name="Kaku Y."/>
            <person name="Kodaira H."/>
            <person name="Kondo H."/>
            <person name="Sugawara M."/>
            <person name="Takahashi M."/>
            <person name="Kanda K."/>
            <person name="Yokoi T."/>
            <person name="Furuya T."/>
            <person name="Kikkawa E."/>
            <person name="Omura Y."/>
            <person name="Abe K."/>
            <person name="Kamihara K."/>
            <person name="Katsuta N."/>
            <person name="Sato K."/>
            <person name="Tanikawa M."/>
            <person name="Yamazaki M."/>
            <person name="Ninomiya K."/>
            <person name="Ishibashi T."/>
            <person name="Yamashita H."/>
            <person name="Murakawa K."/>
            <person name="Fujimori K."/>
            <person name="Tanai H."/>
            <person name="Kimata M."/>
            <person name="Watanabe M."/>
            <person name="Hiraoka S."/>
            <person name="Chiba Y."/>
            <person name="Ishida S."/>
            <person name="Ono Y."/>
            <person name="Takiguchi S."/>
            <person name="Watanabe S."/>
            <person name="Yosida M."/>
            <person name="Hotuta T."/>
            <person name="Kusano J."/>
            <person name="Kanehori K."/>
            <person name="Takahashi-Fujii A."/>
            <person name="Hara H."/>
            <person name="Tanase T.-O."/>
            <person name="Nomura Y."/>
            <person name="Togiya S."/>
            <person name="Komai F."/>
            <person name="Hara R."/>
            <person name="Takeuchi K."/>
            <person name="Arita M."/>
            <person name="Imose N."/>
            <person name="Musashino K."/>
            <person name="Yuuki H."/>
            <person name="Oshima A."/>
            <person name="Sasaki N."/>
            <person name="Aotsuka S."/>
            <person name="Yoshikawa Y."/>
            <person name="Matsunawa H."/>
            <person name="Ichihara T."/>
            <person name="Shiohata N."/>
            <person name="Sano S."/>
            <person name="Moriya S."/>
            <person name="Momiyama H."/>
            <person name="Satoh N."/>
            <person name="Takami S."/>
            <person name="Terashima Y."/>
            <person name="Suzuki O."/>
            <person name="Nakagawa S."/>
            <person name="Senoh A."/>
            <person name="Mizoguchi H."/>
            <person name="Goto Y."/>
            <person name="Shimizu F."/>
            <person name="Wakebe H."/>
            <person name="Hishigaki H."/>
            <person name="Watanabe T."/>
            <person name="Sugiyama A."/>
            <person name="Takemoto M."/>
            <person name="Kawakami B."/>
            <person name="Yamazaki M."/>
            <person name="Watanabe K."/>
            <person name="Kumagai A."/>
            <person name="Itakura S."/>
            <person name="Fukuzumi Y."/>
            <person name="Fujimori Y."/>
            <person name="Komiyama M."/>
            <person name="Tashiro H."/>
            <person name="Tanigami A."/>
            <person name="Fujiwara T."/>
            <person name="Ono T."/>
            <person name="Yamada K."/>
            <person name="Fujii Y."/>
            <person name="Ozaki K."/>
            <person name="Hirao M."/>
            <person name="Ohmori Y."/>
            <person name="Kawabata A."/>
            <person name="Hikiji T."/>
            <person name="Kobatake N."/>
            <person name="Inagaki H."/>
            <person name="Ikema Y."/>
            <person name="Okamoto S."/>
            <person name="Okitani R."/>
            <person name="Kawakami T."/>
            <person name="Noguchi S."/>
            <person name="Itoh T."/>
            <person name="Shigeta K."/>
            <person name="Senba T."/>
            <person name="Matsumura K."/>
            <person name="Nakajima Y."/>
            <person name="Mizuno T."/>
            <person name="Morinaga M."/>
            <person name="Sasaki M."/>
            <person name="Togashi T."/>
            <person name="Oyama M."/>
            <person name="Hata H."/>
            <person name="Watanabe M."/>
            <person name="Komatsu T."/>
            <person name="Mizushima-Sugano J."/>
            <person name="Satoh T."/>
            <person name="Shirai Y."/>
            <person name="Takahashi Y."/>
            <person name="Nakagawa K."/>
            <person name="Okumura K."/>
            <person name="Nagase T."/>
            <person name="Nomura N."/>
            <person name="Kikuchi H."/>
            <person name="Masuho Y."/>
            <person name="Yamashita R."/>
            <person name="Nakai K."/>
            <person name="Yada T."/>
            <person name="Nakamura Y."/>
            <person name="Ohara O."/>
            <person name="Isogai T."/>
            <person name="Sugano S."/>
        </authorList>
    </citation>
    <scope>NUCLEOTIDE SEQUENCE [LARGE SCALE MRNA] (ISOFORM 4)</scope>
    <source>
        <tissue>Uterus</tissue>
    </source>
</reference>
<reference key="3">
    <citation type="journal article" date="2005" name="Nature">
        <title>The DNA sequence of the human X chromosome.</title>
        <authorList>
            <person name="Ross M.T."/>
            <person name="Grafham D.V."/>
            <person name="Coffey A.J."/>
            <person name="Scherer S."/>
            <person name="McLay K."/>
            <person name="Muzny D."/>
            <person name="Platzer M."/>
            <person name="Howell G.R."/>
            <person name="Burrows C."/>
            <person name="Bird C.P."/>
            <person name="Frankish A."/>
            <person name="Lovell F.L."/>
            <person name="Howe K.L."/>
            <person name="Ashurst J.L."/>
            <person name="Fulton R.S."/>
            <person name="Sudbrak R."/>
            <person name="Wen G."/>
            <person name="Jones M.C."/>
            <person name="Hurles M.E."/>
            <person name="Andrews T.D."/>
            <person name="Scott C.E."/>
            <person name="Searle S."/>
            <person name="Ramser J."/>
            <person name="Whittaker A."/>
            <person name="Deadman R."/>
            <person name="Carter N.P."/>
            <person name="Hunt S.E."/>
            <person name="Chen R."/>
            <person name="Cree A."/>
            <person name="Gunaratne P."/>
            <person name="Havlak P."/>
            <person name="Hodgson A."/>
            <person name="Metzker M.L."/>
            <person name="Richards S."/>
            <person name="Scott G."/>
            <person name="Steffen D."/>
            <person name="Sodergren E."/>
            <person name="Wheeler D.A."/>
            <person name="Worley K.C."/>
            <person name="Ainscough R."/>
            <person name="Ambrose K.D."/>
            <person name="Ansari-Lari M.A."/>
            <person name="Aradhya S."/>
            <person name="Ashwell R.I."/>
            <person name="Babbage A.K."/>
            <person name="Bagguley C.L."/>
            <person name="Ballabio A."/>
            <person name="Banerjee R."/>
            <person name="Barker G.E."/>
            <person name="Barlow K.F."/>
            <person name="Barrett I.P."/>
            <person name="Bates K.N."/>
            <person name="Beare D.M."/>
            <person name="Beasley H."/>
            <person name="Beasley O."/>
            <person name="Beck A."/>
            <person name="Bethel G."/>
            <person name="Blechschmidt K."/>
            <person name="Brady N."/>
            <person name="Bray-Allen S."/>
            <person name="Bridgeman A.M."/>
            <person name="Brown A.J."/>
            <person name="Brown M.J."/>
            <person name="Bonnin D."/>
            <person name="Bruford E.A."/>
            <person name="Buhay C."/>
            <person name="Burch P."/>
            <person name="Burford D."/>
            <person name="Burgess J."/>
            <person name="Burrill W."/>
            <person name="Burton J."/>
            <person name="Bye J.M."/>
            <person name="Carder C."/>
            <person name="Carrel L."/>
            <person name="Chako J."/>
            <person name="Chapman J.C."/>
            <person name="Chavez D."/>
            <person name="Chen E."/>
            <person name="Chen G."/>
            <person name="Chen Y."/>
            <person name="Chen Z."/>
            <person name="Chinault C."/>
            <person name="Ciccodicola A."/>
            <person name="Clark S.Y."/>
            <person name="Clarke G."/>
            <person name="Clee C.M."/>
            <person name="Clegg S."/>
            <person name="Clerc-Blankenburg K."/>
            <person name="Clifford K."/>
            <person name="Cobley V."/>
            <person name="Cole C.G."/>
            <person name="Conquer J.S."/>
            <person name="Corby N."/>
            <person name="Connor R.E."/>
            <person name="David R."/>
            <person name="Davies J."/>
            <person name="Davis C."/>
            <person name="Davis J."/>
            <person name="Delgado O."/>
            <person name="Deshazo D."/>
            <person name="Dhami P."/>
            <person name="Ding Y."/>
            <person name="Dinh H."/>
            <person name="Dodsworth S."/>
            <person name="Draper H."/>
            <person name="Dugan-Rocha S."/>
            <person name="Dunham A."/>
            <person name="Dunn M."/>
            <person name="Durbin K.J."/>
            <person name="Dutta I."/>
            <person name="Eades T."/>
            <person name="Ellwood M."/>
            <person name="Emery-Cohen A."/>
            <person name="Errington H."/>
            <person name="Evans K.L."/>
            <person name="Faulkner L."/>
            <person name="Francis F."/>
            <person name="Frankland J."/>
            <person name="Fraser A.E."/>
            <person name="Galgoczy P."/>
            <person name="Gilbert J."/>
            <person name="Gill R."/>
            <person name="Gloeckner G."/>
            <person name="Gregory S.G."/>
            <person name="Gribble S."/>
            <person name="Griffiths C."/>
            <person name="Grocock R."/>
            <person name="Gu Y."/>
            <person name="Gwilliam R."/>
            <person name="Hamilton C."/>
            <person name="Hart E.A."/>
            <person name="Hawes A."/>
            <person name="Heath P.D."/>
            <person name="Heitmann K."/>
            <person name="Hennig S."/>
            <person name="Hernandez J."/>
            <person name="Hinzmann B."/>
            <person name="Ho S."/>
            <person name="Hoffs M."/>
            <person name="Howden P.J."/>
            <person name="Huckle E.J."/>
            <person name="Hume J."/>
            <person name="Hunt P.J."/>
            <person name="Hunt A.R."/>
            <person name="Isherwood J."/>
            <person name="Jacob L."/>
            <person name="Johnson D."/>
            <person name="Jones S."/>
            <person name="de Jong P.J."/>
            <person name="Joseph S.S."/>
            <person name="Keenan S."/>
            <person name="Kelly S."/>
            <person name="Kershaw J.K."/>
            <person name="Khan Z."/>
            <person name="Kioschis P."/>
            <person name="Klages S."/>
            <person name="Knights A.J."/>
            <person name="Kosiura A."/>
            <person name="Kovar-Smith C."/>
            <person name="Laird G.K."/>
            <person name="Langford C."/>
            <person name="Lawlor S."/>
            <person name="Leversha M."/>
            <person name="Lewis L."/>
            <person name="Liu W."/>
            <person name="Lloyd C."/>
            <person name="Lloyd D.M."/>
            <person name="Loulseged H."/>
            <person name="Loveland J.E."/>
            <person name="Lovell J.D."/>
            <person name="Lozado R."/>
            <person name="Lu J."/>
            <person name="Lyne R."/>
            <person name="Ma J."/>
            <person name="Maheshwari M."/>
            <person name="Matthews L.H."/>
            <person name="McDowall J."/>
            <person name="McLaren S."/>
            <person name="McMurray A."/>
            <person name="Meidl P."/>
            <person name="Meitinger T."/>
            <person name="Milne S."/>
            <person name="Miner G."/>
            <person name="Mistry S.L."/>
            <person name="Morgan M."/>
            <person name="Morris S."/>
            <person name="Mueller I."/>
            <person name="Mullikin J.C."/>
            <person name="Nguyen N."/>
            <person name="Nordsiek G."/>
            <person name="Nyakatura G."/>
            <person name="O'dell C.N."/>
            <person name="Okwuonu G."/>
            <person name="Palmer S."/>
            <person name="Pandian R."/>
            <person name="Parker D."/>
            <person name="Parrish J."/>
            <person name="Pasternak S."/>
            <person name="Patel D."/>
            <person name="Pearce A.V."/>
            <person name="Pearson D.M."/>
            <person name="Pelan S.E."/>
            <person name="Perez L."/>
            <person name="Porter K.M."/>
            <person name="Ramsey Y."/>
            <person name="Reichwald K."/>
            <person name="Rhodes S."/>
            <person name="Ridler K.A."/>
            <person name="Schlessinger D."/>
            <person name="Schueler M.G."/>
            <person name="Sehra H.K."/>
            <person name="Shaw-Smith C."/>
            <person name="Shen H."/>
            <person name="Sheridan E.M."/>
            <person name="Shownkeen R."/>
            <person name="Skuce C.D."/>
            <person name="Smith M.L."/>
            <person name="Sotheran E.C."/>
            <person name="Steingruber H.E."/>
            <person name="Steward C.A."/>
            <person name="Storey R."/>
            <person name="Swann R.M."/>
            <person name="Swarbreck D."/>
            <person name="Tabor P.E."/>
            <person name="Taudien S."/>
            <person name="Taylor T."/>
            <person name="Teague B."/>
            <person name="Thomas K."/>
            <person name="Thorpe A."/>
            <person name="Timms K."/>
            <person name="Tracey A."/>
            <person name="Trevanion S."/>
            <person name="Tromans A.C."/>
            <person name="d'Urso M."/>
            <person name="Verduzco D."/>
            <person name="Villasana D."/>
            <person name="Waldron L."/>
            <person name="Wall M."/>
            <person name="Wang Q."/>
            <person name="Warren J."/>
            <person name="Warry G.L."/>
            <person name="Wei X."/>
            <person name="West A."/>
            <person name="Whitehead S.L."/>
            <person name="Whiteley M.N."/>
            <person name="Wilkinson J.E."/>
            <person name="Willey D.L."/>
            <person name="Williams G."/>
            <person name="Williams L."/>
            <person name="Williamson A."/>
            <person name="Williamson H."/>
            <person name="Wilming L."/>
            <person name="Woodmansey R.L."/>
            <person name="Wray P.W."/>
            <person name="Yen J."/>
            <person name="Zhang J."/>
            <person name="Zhou J."/>
            <person name="Zoghbi H."/>
            <person name="Zorilla S."/>
            <person name="Buck D."/>
            <person name="Reinhardt R."/>
            <person name="Poustka A."/>
            <person name="Rosenthal A."/>
            <person name="Lehrach H."/>
            <person name="Meindl A."/>
            <person name="Minx P.J."/>
            <person name="Hillier L.W."/>
            <person name="Willard H.F."/>
            <person name="Wilson R.K."/>
            <person name="Waterston R.H."/>
            <person name="Rice C.M."/>
            <person name="Vaudin M."/>
            <person name="Coulson A."/>
            <person name="Nelson D.L."/>
            <person name="Weinstock G."/>
            <person name="Sulston J.E."/>
            <person name="Durbin R.M."/>
            <person name="Hubbard T."/>
            <person name="Gibbs R.A."/>
            <person name="Beck S."/>
            <person name="Rogers J."/>
            <person name="Bentley D.R."/>
        </authorList>
    </citation>
    <scope>NUCLEOTIDE SEQUENCE [LARGE SCALE GENOMIC DNA]</scope>
</reference>
<reference key="4">
    <citation type="submission" date="2005-07" db="EMBL/GenBank/DDBJ databases">
        <authorList>
            <person name="Mural R.J."/>
            <person name="Istrail S."/>
            <person name="Sutton G."/>
            <person name="Florea L."/>
            <person name="Halpern A.L."/>
            <person name="Mobarry C.M."/>
            <person name="Lippert R."/>
            <person name="Walenz B."/>
            <person name="Shatkay H."/>
            <person name="Dew I."/>
            <person name="Miller J.R."/>
            <person name="Flanigan M.J."/>
            <person name="Edwards N.J."/>
            <person name="Bolanos R."/>
            <person name="Fasulo D."/>
            <person name="Halldorsson B.V."/>
            <person name="Hannenhalli S."/>
            <person name="Turner R."/>
            <person name="Yooseph S."/>
            <person name="Lu F."/>
            <person name="Nusskern D.R."/>
            <person name="Shue B.C."/>
            <person name="Zheng X.H."/>
            <person name="Zhong F."/>
            <person name="Delcher A.L."/>
            <person name="Huson D.H."/>
            <person name="Kravitz S.A."/>
            <person name="Mouchard L."/>
            <person name="Reinert K."/>
            <person name="Remington K.A."/>
            <person name="Clark A.G."/>
            <person name="Waterman M.S."/>
            <person name="Eichler E.E."/>
            <person name="Adams M.D."/>
            <person name="Hunkapiller M.W."/>
            <person name="Myers E.W."/>
            <person name="Venter J.C."/>
        </authorList>
    </citation>
    <scope>NUCLEOTIDE SEQUENCE [LARGE SCALE GENOMIC DNA]</scope>
</reference>
<reference key="5">
    <citation type="journal article" date="2004" name="Genome Res.">
        <title>The status, quality, and expansion of the NIH full-length cDNA project: the Mammalian Gene Collection (MGC).</title>
        <authorList>
            <consortium name="The MGC Project Team"/>
        </authorList>
    </citation>
    <scope>NUCLEOTIDE SEQUENCE [LARGE SCALE MRNA] (ISOFORM 5)</scope>
    <source>
        <tissue>Eye</tissue>
    </source>
</reference>
<reference key="6">
    <citation type="journal article" date="1994" name="Hum. Mol. Genet.">
        <title>A novel X gene with a widely transcribed Y-linked homologue escapes X-inactivation in mouse and human.</title>
        <authorList>
            <person name="Agulnik A.I."/>
            <person name="Mitchell M.J."/>
            <person name="Mattei M.-G."/>
            <person name="Borsani G."/>
            <person name="Avner P.A."/>
            <person name="Lerner J.L."/>
            <person name="Bishop C.E."/>
        </authorList>
    </citation>
    <scope>NUCLEOTIDE SEQUENCE [MRNA] OF 280-344</scope>
    <source>
        <tissue>Blood</tissue>
    </source>
</reference>
<reference key="7">
    <citation type="journal article" date="2006" name="Nat. Biotechnol.">
        <title>A probability-based approach for high-throughput protein phosphorylation analysis and site localization.</title>
        <authorList>
            <person name="Beausoleil S.A."/>
            <person name="Villen J."/>
            <person name="Gerber S.A."/>
            <person name="Rush J."/>
            <person name="Gygi S.P."/>
        </authorList>
    </citation>
    <scope>PHOSPHORYLATION [LARGE SCALE ANALYSIS] AT SER-1359</scope>
    <scope>IDENTIFICATION BY MASS SPECTROMETRY [LARGE SCALE ANALYSIS]</scope>
    <source>
        <tissue>Cervix carcinoma</tissue>
    </source>
</reference>
<reference key="8">
    <citation type="journal article" date="2007" name="Cell">
        <title>RBP2 belongs to a family of demethylases, specific for tri-and dimethylated lysine 4 on histone 3.</title>
        <authorList>
            <person name="Christensen J."/>
            <person name="Agger K."/>
            <person name="Cloos P.A.C."/>
            <person name="Pasini D."/>
            <person name="Rose S."/>
            <person name="Sennels L."/>
            <person name="Rappsilber J."/>
            <person name="Hansen K.H."/>
            <person name="Salcini A.E."/>
            <person name="Helin K."/>
        </authorList>
    </citation>
    <scope>FUNCTION</scope>
</reference>
<reference key="9">
    <citation type="journal article" date="2007" name="Cell">
        <title>The X-linked mental retardation gene SMCX/JARID1C defines a family of histone H3 lysine 4 demethylases.</title>
        <authorList>
            <person name="Iwase S."/>
            <person name="Lan F."/>
            <person name="Bayliss P."/>
            <person name="de la Torre-Ubieta L."/>
            <person name="Huarte M."/>
            <person name="Qi H.H."/>
            <person name="Whetstine J.R."/>
            <person name="Bonni A."/>
            <person name="Roberts T.M."/>
            <person name="Shi Y."/>
        </authorList>
    </citation>
    <scope>FUNCTION</scope>
    <scope>MUTAGENESIS OF HIS-514</scope>
    <scope>CHARACTERIZATION OF VARIANTS MRXSCJ PRO-388; LEU-642; PHE-731 AND CYS-751</scope>
</reference>
<reference key="10">
    <citation type="journal article" date="2007" name="Nature">
        <title>The histone H3K4 demethylase SMCX links REST target genes to X-linked mental retardation.</title>
        <authorList>
            <person name="Tahiliani M."/>
            <person name="Mei P."/>
            <person name="Fang R."/>
            <person name="Leonor T."/>
            <person name="Rutenberg M."/>
            <person name="Shimizu F."/>
            <person name="Li J."/>
            <person name="Rao A."/>
            <person name="Shi Y."/>
        </authorList>
    </citation>
    <scope>FUNCTION</scope>
    <scope>SUBUNIT</scope>
    <scope>MUTAGENESIS OF HIS-514</scope>
    <scope>SUBCELLULAR LOCATION</scope>
    <scope>CHARACTERIZATION OF VARIANTS MRXSCJ GLY-87; TYR-402 AND CYS-751</scope>
</reference>
<reference key="11">
    <citation type="journal article" date="2008" name="Proc. Natl. Acad. Sci. U.S.A.">
        <title>A quantitative atlas of mitotic phosphorylation.</title>
        <authorList>
            <person name="Dephoure N."/>
            <person name="Zhou C."/>
            <person name="Villen J."/>
            <person name="Beausoleil S.A."/>
            <person name="Bakalarski C.E."/>
            <person name="Elledge S.J."/>
            <person name="Gygi S.P."/>
        </authorList>
    </citation>
    <scope>PHOSPHORYLATION [LARGE SCALE ANALYSIS] AT SER-317</scope>
    <scope>IDENTIFICATION BY MASS SPECTROMETRY [LARGE SCALE ANALYSIS]</scope>
    <source>
        <tissue>Cervix carcinoma</tissue>
    </source>
</reference>
<reference key="12">
    <citation type="journal article" date="2009" name="Sci. Signal.">
        <title>Quantitative phosphoproteomic analysis of T cell receptor signaling reveals system-wide modulation of protein-protein interactions.</title>
        <authorList>
            <person name="Mayya V."/>
            <person name="Lundgren D.H."/>
            <person name="Hwang S.-I."/>
            <person name="Rezaul K."/>
            <person name="Wu L."/>
            <person name="Eng J.K."/>
            <person name="Rodionov V."/>
            <person name="Han D.K."/>
        </authorList>
    </citation>
    <scope>PHOSPHORYLATION [LARGE SCALE ANALYSIS] AT SER-1359</scope>
    <scope>IDENTIFICATION BY MASS SPECTROMETRY [LARGE SCALE ANALYSIS]</scope>
    <source>
        <tissue>Leukemic T-cell</tissue>
    </source>
</reference>
<reference key="13">
    <citation type="journal article" date="2010" name="Sci. Signal.">
        <title>Quantitative phosphoproteomics reveals widespread full phosphorylation site occupancy during mitosis.</title>
        <authorList>
            <person name="Olsen J.V."/>
            <person name="Vermeulen M."/>
            <person name="Santamaria A."/>
            <person name="Kumar C."/>
            <person name="Miller M.L."/>
            <person name="Jensen L.J."/>
            <person name="Gnad F."/>
            <person name="Cox J."/>
            <person name="Jensen T.S."/>
            <person name="Nigg E.A."/>
            <person name="Brunak S."/>
            <person name="Mann M."/>
        </authorList>
    </citation>
    <scope>PHOSPHORYLATION [LARGE SCALE ANALYSIS] AT SER-1359</scope>
    <scope>IDENTIFICATION BY MASS SPECTROMETRY [LARGE SCALE ANALYSIS]</scope>
    <source>
        <tissue>Cervix carcinoma</tissue>
    </source>
</reference>
<reference key="14">
    <citation type="journal article" date="2011" name="BMC Syst. Biol.">
        <title>Initial characterization of the human central proteome.</title>
        <authorList>
            <person name="Burkard T.R."/>
            <person name="Planyavsky M."/>
            <person name="Kaupe I."/>
            <person name="Breitwieser F.P."/>
            <person name="Buerckstuemmer T."/>
            <person name="Bennett K.L."/>
            <person name="Superti-Furga G."/>
            <person name="Colinge J."/>
        </authorList>
    </citation>
    <scope>IDENTIFICATION BY MASS SPECTROMETRY [LARGE SCALE ANALYSIS]</scope>
</reference>
<reference key="15">
    <citation type="journal article" date="2011" name="Sci. Signal.">
        <title>System-wide temporal characterization of the proteome and phosphoproteome of human embryonic stem cell differentiation.</title>
        <authorList>
            <person name="Rigbolt K.T."/>
            <person name="Prokhorova T.A."/>
            <person name="Akimov V."/>
            <person name="Henningsen J."/>
            <person name="Johansen P.T."/>
            <person name="Kratchmarova I."/>
            <person name="Kassem M."/>
            <person name="Mann M."/>
            <person name="Olsen J.V."/>
            <person name="Blagoev B."/>
        </authorList>
    </citation>
    <scope>PHOSPHORYLATION [LARGE SCALE ANALYSIS] AT SER-1359</scope>
    <scope>IDENTIFICATION BY MASS SPECTROMETRY [LARGE SCALE ANALYSIS]</scope>
</reference>
<reference key="16">
    <citation type="journal article" date="2013" name="J. Proteome Res.">
        <title>Toward a comprehensive characterization of a human cancer cell phosphoproteome.</title>
        <authorList>
            <person name="Zhou H."/>
            <person name="Di Palma S."/>
            <person name="Preisinger C."/>
            <person name="Peng M."/>
            <person name="Polat A.N."/>
            <person name="Heck A.J."/>
            <person name="Mohammed S."/>
        </authorList>
    </citation>
    <scope>PHOSPHORYLATION [LARGE SCALE ANALYSIS] AT SER-287; SER-301; SER-317; SER-897 AND SER-1359</scope>
    <scope>IDENTIFICATION BY MASS SPECTROMETRY [LARGE SCALE ANALYSIS]</scope>
    <source>
        <tissue>Cervix carcinoma</tissue>
        <tissue>Erythroleukemia</tissue>
    </source>
</reference>
<reference key="17">
    <citation type="journal article" date="2016" name="J. Biol. Chem.">
        <title>Characterization of a Linked Jumonji Domain of the KDM5/JARID1 Family of Histone H3 Lysine 4 Demethylases.</title>
        <authorList>
            <person name="Horton J.R."/>
            <person name="Engstrom A."/>
            <person name="Zoeller E.L."/>
            <person name="Liu X."/>
            <person name="Shanks J.R."/>
            <person name="Zhang X."/>
            <person name="Johns M.A."/>
            <person name="Vertino P.M."/>
            <person name="Fu H."/>
            <person name="Cheng X."/>
        </authorList>
    </citation>
    <scope>FUNCTION</scope>
    <scope>CATALYTIC ACTIVITY</scope>
    <scope>BIOPHYSICOCHEMICAL PROPERTIES</scope>
</reference>
<reference key="18">
    <citation type="journal article" date="2017" name="Cell Chem. Biol.">
        <title>Potent and Selective KDM5 Inhibitor Stops Cellular Demethylation of H3K4me3 at Transcription Start Sites and Proliferation of MM1S Myeloma Cells.</title>
        <authorList>
            <person name="Tumber A."/>
            <person name="Nuzzi A."/>
            <person name="Hookway E.S."/>
            <person name="Hatch S.B."/>
            <person name="Velupillai S."/>
            <person name="Johansson C."/>
            <person name="Kawamura A."/>
            <person name="Savitsky P."/>
            <person name="Yapp C."/>
            <person name="Szykowska A."/>
            <person name="Wu N."/>
            <person name="Bountra C."/>
            <person name="Strain-Damerell C."/>
            <person name="Burgess-Brown N.A."/>
            <person name="Ruda G.F."/>
            <person name="Fedorov O."/>
            <person name="Munro S."/>
            <person name="England K.S."/>
            <person name="Nowak R.P."/>
            <person name="Schofield C.J."/>
            <person name="La Thangue N.B."/>
            <person name="Pawlyn C."/>
            <person name="Davies F."/>
            <person name="Morgan G."/>
            <person name="Athanasou N."/>
            <person name="Muller S."/>
            <person name="Oppermann U."/>
            <person name="Brennan P.E."/>
        </authorList>
    </citation>
    <scope>FUNCTION</scope>
    <scope>ACTIVITY REGULATION</scope>
    <scope>MUTAGENESIS OF 514-HIS--GLU-516</scope>
</reference>
<reference key="19">
    <citation type="journal article" date="2017" name="Nat. Struct. Mol. Biol.">
        <title>Site-specific mapping of the human SUMO proteome reveals co-modification with phosphorylation.</title>
        <authorList>
            <person name="Hendriks I.A."/>
            <person name="Lyon D."/>
            <person name="Young C."/>
            <person name="Jensen L.J."/>
            <person name="Vertegaal A.C."/>
            <person name="Nielsen M.L."/>
        </authorList>
    </citation>
    <scope>SUMOYLATION [LARGE SCALE ANALYSIS] AT LYS-205; LYS-229; LYS-244; LYS-274; LYS-295 AND LYS-1127</scope>
    <scope>IDENTIFICATION BY MASS SPECTROMETRY [LARGE SCALE ANALYSIS]</scope>
</reference>
<reference key="20">
    <citation type="journal article" date="2020" name="Cell Death Dis.">
        <title>Suppression of poised oncogenes by ZMYND8 promotes chemo-sensitization.</title>
        <authorList>
            <person name="Mukherjee S."/>
            <person name="Adhikary S."/>
            <person name="Gadad S.S."/>
            <person name="Mondal P."/>
            <person name="Sen S."/>
            <person name="Choudhari R."/>
            <person name="Singh V."/>
            <person name="Adhikari S."/>
            <person name="Mandal P."/>
            <person name="Chaudhuri S."/>
            <person name="Sengupta A."/>
            <person name="Lakshmanaswamy R."/>
            <person name="Chakrabarti P."/>
            <person name="Roy S."/>
            <person name="Das C."/>
        </authorList>
    </citation>
    <scope>INTERACTION WITH ZMYND8</scope>
</reference>
<reference key="21">
    <citation type="journal article" date="2008" name="Biomol. NMR. Assign.">
        <title>Backbone and sidechain 1H, 13C and 15N resonance assignments of the Bright/ARID domain from the human JARID1C (SMCX) protein.</title>
        <authorList>
            <person name="Koehler C."/>
            <person name="Bishop S."/>
            <person name="Dowler E.F."/>
            <person name="Schmieder P."/>
            <person name="Diehl A."/>
            <person name="Oschkinat H."/>
            <person name="Ball L.J."/>
        </authorList>
    </citation>
    <scope>STRUCTURE BY NMR OF 73-188</scope>
</reference>
<reference key="22">
    <citation type="journal article" date="2016" name="Nat. Chem. Biol.">
        <title>Structural analysis of human KDM5B guides histone demethylase inhibitor development.</title>
        <authorList>
            <person name="Johansson C."/>
            <person name="Velupillai S."/>
            <person name="Tumber A."/>
            <person name="Szykowska A."/>
            <person name="Hookway E.S."/>
            <person name="Nowak R.P."/>
            <person name="Strain-Damerell C."/>
            <person name="Gileadi C."/>
            <person name="Philpott M."/>
            <person name="Burgess-Brown N."/>
            <person name="Wu N."/>
            <person name="Kopec J."/>
            <person name="Nuzzi A."/>
            <person name="Steuber H."/>
            <person name="Egner U."/>
            <person name="Badock V."/>
            <person name="Munro S."/>
            <person name="LaThangue N.B."/>
            <person name="Westaway S."/>
            <person name="Brown J."/>
            <person name="Athanasou N."/>
            <person name="Prinjha R."/>
            <person name="Brennan P.E."/>
            <person name="Oppermann U."/>
        </authorList>
    </citation>
    <scope>X-RAY CRYSTALLOGRAPHY (2.10 ANGSTROMS) OF 384-772 IN COMPLEX WITH MANGANESE AND ZINC</scope>
</reference>
<reference key="23">
    <citation type="journal article" date="2005" name="Am. J. Hum. Genet.">
        <title>Mutations in the JARID1C gene, which is involved in transcriptional regulation and chromatin remodeling, cause X-linked mental retardation.</title>
        <authorList>
            <person name="Jensen L.R."/>
            <person name="Amende M."/>
            <person name="Gurok U."/>
            <person name="Moser B."/>
            <person name="Gimmel V."/>
            <person name="Tzschach A."/>
            <person name="Janecke A.R."/>
            <person name="Tariverdian G."/>
            <person name="Chelly J."/>
            <person name="Fryns J.-P."/>
            <person name="Van Esch H."/>
            <person name="Kleefstra T."/>
            <person name="Hamel B.C.J."/>
            <person name="Moraine C."/>
            <person name="Gecz J."/>
            <person name="Turner G."/>
            <person name="Reinhardt R."/>
            <person name="Kalscheuer V.M."/>
            <person name="Ropers H.-H."/>
            <person name="Lenzner S."/>
        </authorList>
    </citation>
    <scope>VARIANTS MRXSCJ PRO-388; TYR-402; LYS-698 AND PHE-731</scope>
    <scope>TISSUE SPECIFICITY</scope>
</reference>
<reference key="24">
    <citation type="journal article" date="2006" name="Eur. J. Hum. Genet.">
        <title>A novel mutation in JARID1C gene associated with mental retardation.</title>
        <authorList>
            <person name="Santos C."/>
            <person name="Rodriguez-Revenga L."/>
            <person name="Madrigal I."/>
            <person name="Badenas C."/>
            <person name="Pineda M."/>
            <person name="Mila M."/>
        </authorList>
    </citation>
    <scope>VARIANT MRXSCJ ARG-451</scope>
</reference>
<reference key="25">
    <citation type="journal article" date="2006" name="Hum. Mutat.">
        <title>Novel JARID1C/SMCX mutations in patients with X-linked mental retardation.</title>
        <authorList>
            <person name="Tzschach A."/>
            <person name="Lenzner S."/>
            <person name="Moser B."/>
            <person name="Reinhardt R."/>
            <person name="Chelly J."/>
            <person name="Fryns J.-P."/>
            <person name="Kleefstra T."/>
            <person name="Raynaud M."/>
            <person name="Turner G."/>
            <person name="Ropers H.-H."/>
            <person name="Kuss A."/>
            <person name="Jensen L.R."/>
        </authorList>
    </citation>
    <scope>VARIANTS MRXSCJ GLY-87; LEU-642; TRP-750 AND CYS-751</scope>
</reference>
<reference key="26">
    <citation type="journal article" date="2010" name="Nat. Genet.">
        <title>A de novo paradigm for mental retardation.</title>
        <authorList>
            <person name="Vissers L.E."/>
            <person name="de Ligt J."/>
            <person name="Gilissen C."/>
            <person name="Janssen I."/>
            <person name="Steehouwer M."/>
            <person name="de Vries P."/>
            <person name="van Lier B."/>
            <person name="Arts P."/>
            <person name="Wieskamp N."/>
            <person name="del Rosario M."/>
            <person name="van Bon B.W."/>
            <person name="Hoischen A."/>
            <person name="de Vries B.B."/>
            <person name="Brunner H.G."/>
            <person name="Veltman J.A."/>
        </authorList>
    </citation>
    <scope>VARIANT TYR-640</scope>
</reference>
<reference key="27">
    <citation type="journal article" date="2013" name="BMC Med. Genomics">
        <title>Multilocus loss of DNA methylation in individuals with mutations in the histone H3 lysine 4 demethylase KDM5C.</title>
        <authorList>
            <person name="Grafodatskaya D."/>
            <person name="Chung B.H."/>
            <person name="Butcher D.T."/>
            <person name="Turinsky A.L."/>
            <person name="Goodman S.J."/>
            <person name="Choufani S."/>
            <person name="Chen Y.A."/>
            <person name="Lou Y."/>
            <person name="Zhao C."/>
            <person name="Rajendram R."/>
            <person name="Abidi F.E."/>
            <person name="Skinner C."/>
            <person name="Stavropoulos J."/>
            <person name="Bondy C.A."/>
            <person name="Hamilton J."/>
            <person name="Wodak S."/>
            <person name="Scherer S.W."/>
            <person name="Schwartz C.E."/>
            <person name="Weksberg R."/>
        </authorList>
    </citation>
    <scope>VARIANT MRXSCJ LEU-480</scope>
</reference>
<reference key="28">
    <citation type="journal article" date="2015" name="Hum. Mol. Genet.">
        <title>Mutations in the intellectual disability gene KDM5C reduce protein stability and demethylase activity.</title>
        <authorList>
            <person name="Brookes E."/>
            <person name="Laurent B."/>
            <person name="Ounap K."/>
            <person name="Carroll R."/>
            <person name="Moeschler J.B."/>
            <person name="Field M."/>
            <person name="Schwartz C.E."/>
            <person name="Gecz J."/>
            <person name="Shi Y."/>
        </authorList>
    </citation>
    <scope>CHARACTERIZATION OF VARIANTS MRXSCJ TYR-402 AND LEU-480</scope>
</reference>
<sequence>MEPGSDDFLPPPECPVFEPSWAEFRDPLGYIAKIRPIAEKSGICKIRPPADWQPPFAVEVDNFRFTPRIQRLNELEAQTRVKLNYLDQIAKFWEIQGSSLKIPNVERRILDLYSLSKIVVEEGGYEAICKDRRWARVAQRLNYPPGKNIGSLLRSHYERIVYPYEMYQSGANLVQCNTRPFDNEEKDKEYKPHSIPLRQSVQPSKFNSYGRRAKRLQPDPEPTEEDIEKNPELKKLQIYGAGPKMMGLGLMAKDKTLRKKDKEGPECPPTVVVKEELGGDVKVESTSPKTFLESKEELSHSPEPCTKMTMRLRRNHSNAQFIESYVCRMCSRGDEDDKLLLCDGCDDNYHIFCLLPPLPEIPKGVWRCPKCVMAECKRPPEAFGFEQATREYTLQSFGEMADSFKADYFNMPVHMVPTELVEKEFWRLVNSIEEDVTVEYGADIHSKEFGSGFPVSDSKRHLTPEEEEYATSGWNLNVMPVLEQSVLCHINADISGMKVPWLYVGMVFSAFCWHIEDHWSYSINYLHWGEPKTWYGVPSLAAEHLEEVMKKLTPELFDSQPDLLHQLVTLMNPNTLMSHGVPVVRTNQCAGEFVITFPRAYHSGFNQGYNFAEAVNFCTADWLPAGRQCIEHYRRLRRYCVFSHEELICKMAACPEKLDLNLAAAVHKEMFIMVQEERRLRKALLEKGITEAEREAFELLPDDERQCIKCKTTCFLSALACYDCPDGLVCLSHINDLCKCSSSRQYLRYRYTLDELPAMLHKLKVRAESFDTWANKVRVALEVEDGRKRSLEELRALESEARERRFPNSELLQQLKNCLSEAEACVSRALGLVSGQEAGPHRVAGLQMTLTELRAFLDQMNNLPCAMHQIGDVKGVLEQVEAYQAEAREALASLPSSPGLLQSLLERGRQLGVEVPEAQQLQRQVEQARWLDEVKRTLAPSARRGTLAVMRGLLVAGASVAPSPAVDKAQAELQELLTIAERWEEKAHLCLEARQKHPPATLEAIIREAENIPVHLPNIQALKEALAKARAWIADVDEIQNGDHYPCLDDLEGLVAVGRDLPVGLEELRQLELQVLTAHSWREKASKTFLKKNSCYTLLEVLCPCADAGSDSTKRSRWMEKELGLYKSDTELLGLSAQDLRDPGSVIVAFKEGEQKEKEGILQLRRTNSAKPSPLASSSTASSTTSICVCGQVLAGAGALQCDLCQDWFHGRCVSVPRLLSSPRPNPTSSPLLAWWEWDTKFLCPLCMRSRRPRLETILALLVALQRLPVRLPEGEALQCLTERAISWQGRARQALASEDVTALLGRLAELRQRLQAEPRPEEPPNYPAAPASDPLREGSGKDMPKVQGLLENGDSVTSPEKVAPEEGSGKRDLELLSSLLPQLTGPVLELPEATRAPLEELMMEGDLLEVTLDENHSIWQLLQAGQPPDLERIRTLLELEKAERHGSRARGRALERRRRRKVDRGGEGDDPAREELEPKRVRSSGPEAEEVQEEEELEEETGGEGPPAPIPTTGSPSTQENQNGLEPAEGTTSGPSAPFSTLTPRLHLPCPQQPPQQQL</sequence>
<dbReference type="EC" id="1.14.11.67" evidence="17"/>
<dbReference type="EMBL" id="L25270">
    <property type="protein sequence ID" value="AAA61302.1"/>
    <property type="molecule type" value="mRNA"/>
</dbReference>
<dbReference type="EMBL" id="AK304732">
    <property type="protein sequence ID" value="BAG65494.1"/>
    <property type="molecule type" value="mRNA"/>
</dbReference>
<dbReference type="EMBL" id="AL139396">
    <property type="status" value="NOT_ANNOTATED_CDS"/>
    <property type="molecule type" value="Genomic_DNA"/>
</dbReference>
<dbReference type="EMBL" id="CH471154">
    <property type="protein sequence ID" value="EAW93145.1"/>
    <property type="molecule type" value="Genomic_DNA"/>
</dbReference>
<dbReference type="EMBL" id="BC054499">
    <property type="protein sequence ID" value="AAH54499.1"/>
    <property type="molecule type" value="mRNA"/>
</dbReference>
<dbReference type="EMBL" id="Z29650">
    <property type="protein sequence ID" value="CAA82758.1"/>
    <property type="molecule type" value="mRNA"/>
</dbReference>
<dbReference type="CCDS" id="CCDS14351.1">
    <molecule id="P41229-1"/>
</dbReference>
<dbReference type="CCDS" id="CCDS55417.1">
    <molecule id="P41229-4"/>
</dbReference>
<dbReference type="CCDS" id="CCDS65269.1">
    <molecule id="P41229-5"/>
</dbReference>
<dbReference type="CCDS" id="CCDS87747.1">
    <molecule id="P41229-2"/>
</dbReference>
<dbReference type="PIR" id="I54361">
    <property type="entry name" value="I54361"/>
</dbReference>
<dbReference type="RefSeq" id="NP_001140174.1">
    <molecule id="P41229-4"/>
    <property type="nucleotide sequence ID" value="NM_001146702.2"/>
</dbReference>
<dbReference type="RefSeq" id="NP_001269551.1">
    <molecule id="P41229-5"/>
    <property type="nucleotide sequence ID" value="NM_001282622.3"/>
</dbReference>
<dbReference type="RefSeq" id="NP_001340907.1">
    <molecule id="P41229-2"/>
    <property type="nucleotide sequence ID" value="NM_001353978.3"/>
</dbReference>
<dbReference type="RefSeq" id="NP_004178.2">
    <molecule id="P41229-1"/>
    <property type="nucleotide sequence ID" value="NM_004187.5"/>
</dbReference>
<dbReference type="RefSeq" id="XP_005262092.1">
    <property type="nucleotide sequence ID" value="XM_005262035.4"/>
</dbReference>
<dbReference type="RefSeq" id="XP_011529128.1">
    <property type="nucleotide sequence ID" value="XM_011530826.2"/>
</dbReference>
<dbReference type="PDB" id="2JRZ">
    <property type="method" value="NMR"/>
    <property type="chains" value="A=73-188"/>
</dbReference>
<dbReference type="PDB" id="5FWJ">
    <property type="method" value="X-ray"/>
    <property type="resolution" value="2.10 A"/>
    <property type="chains" value="A/B=8-83, A/B=384-772"/>
</dbReference>
<dbReference type="PDBsum" id="2JRZ"/>
<dbReference type="PDBsum" id="5FWJ"/>
<dbReference type="BMRB" id="P41229"/>
<dbReference type="SMR" id="P41229"/>
<dbReference type="BioGRID" id="113870">
    <property type="interactions" value="136"/>
</dbReference>
<dbReference type="DIP" id="DIP-39663N"/>
<dbReference type="FunCoup" id="P41229">
    <property type="interactions" value="4003"/>
</dbReference>
<dbReference type="IntAct" id="P41229">
    <property type="interactions" value="99"/>
</dbReference>
<dbReference type="MINT" id="P41229"/>
<dbReference type="STRING" id="9606.ENSP00000364550"/>
<dbReference type="BindingDB" id="P41229"/>
<dbReference type="ChEMBL" id="CHEMBL2163176"/>
<dbReference type="GuidetoPHARMACOLOGY" id="2682"/>
<dbReference type="GlyGen" id="P41229">
    <property type="glycosylation" value="1 site, 1 O-linked glycan (1 site)"/>
</dbReference>
<dbReference type="iPTMnet" id="P41229"/>
<dbReference type="PhosphoSitePlus" id="P41229"/>
<dbReference type="BioMuta" id="KDM5C"/>
<dbReference type="DMDM" id="117949812"/>
<dbReference type="jPOST" id="P41229"/>
<dbReference type="MassIVE" id="P41229"/>
<dbReference type="PaxDb" id="9606-ENSP00000364550"/>
<dbReference type="PeptideAtlas" id="P41229"/>
<dbReference type="ProteomicsDB" id="2727"/>
<dbReference type="ProteomicsDB" id="55436">
    <molecule id="P41229-1"/>
</dbReference>
<dbReference type="ProteomicsDB" id="55437">
    <molecule id="P41229-2"/>
</dbReference>
<dbReference type="ProteomicsDB" id="55438">
    <molecule id="P41229-3"/>
</dbReference>
<dbReference type="ProteomicsDB" id="55439">
    <molecule id="P41229-4"/>
</dbReference>
<dbReference type="Pumba" id="P41229"/>
<dbReference type="ABCD" id="P41229">
    <property type="antibodies" value="1 sequenced antibody"/>
</dbReference>
<dbReference type="Antibodypedia" id="26540">
    <property type="antibodies" value="222 antibodies from 32 providers"/>
</dbReference>
<dbReference type="DNASU" id="8242"/>
<dbReference type="Ensembl" id="ENST00000375379.7">
    <molecule id="P41229-2"/>
    <property type="protein sequence ID" value="ENSP00000364528.3"/>
    <property type="gene ID" value="ENSG00000126012.14"/>
</dbReference>
<dbReference type="Ensembl" id="ENST00000375383.7">
    <molecule id="P41229-3"/>
    <property type="protein sequence ID" value="ENSP00000364532.3"/>
    <property type="gene ID" value="ENSG00000126012.14"/>
</dbReference>
<dbReference type="Ensembl" id="ENST00000375401.8">
    <molecule id="P41229-1"/>
    <property type="protein sequence ID" value="ENSP00000364550.4"/>
    <property type="gene ID" value="ENSG00000126012.14"/>
</dbReference>
<dbReference type="Ensembl" id="ENST00000404049.7">
    <molecule id="P41229-5"/>
    <property type="protein sequence ID" value="ENSP00000385394.3"/>
    <property type="gene ID" value="ENSG00000126012.14"/>
</dbReference>
<dbReference type="Ensembl" id="ENST00000452825.7">
    <molecule id="P41229-4"/>
    <property type="protein sequence ID" value="ENSP00000445176.1"/>
    <property type="gene ID" value="ENSG00000126012.14"/>
</dbReference>
<dbReference type="GeneID" id="8242"/>
<dbReference type="KEGG" id="hsa:8242"/>
<dbReference type="MANE-Select" id="ENST00000375401.8">
    <property type="protein sequence ID" value="ENSP00000364550.4"/>
    <property type="RefSeq nucleotide sequence ID" value="NM_004187.5"/>
    <property type="RefSeq protein sequence ID" value="NP_004178.2"/>
</dbReference>
<dbReference type="UCSC" id="uc004drz.4">
    <molecule id="P41229-1"/>
    <property type="organism name" value="human"/>
</dbReference>
<dbReference type="AGR" id="HGNC:11114"/>
<dbReference type="CTD" id="8242"/>
<dbReference type="DisGeNET" id="8242"/>
<dbReference type="GeneCards" id="KDM5C"/>
<dbReference type="HGNC" id="HGNC:11114">
    <property type="gene designation" value="KDM5C"/>
</dbReference>
<dbReference type="HPA" id="ENSG00000126012">
    <property type="expression patterns" value="Low tissue specificity"/>
</dbReference>
<dbReference type="MalaCards" id="KDM5C"/>
<dbReference type="MIM" id="300534">
    <property type="type" value="phenotype"/>
</dbReference>
<dbReference type="MIM" id="314690">
    <property type="type" value="gene"/>
</dbReference>
<dbReference type="neXtProt" id="NX_P41229"/>
<dbReference type="OpenTargets" id="ENSG00000126012"/>
<dbReference type="Orphanet" id="85279">
    <property type="disease" value="KDM5C-related syndromic X-linked intellectual disability"/>
</dbReference>
<dbReference type="PharmGKB" id="PA35964"/>
<dbReference type="VEuPathDB" id="HostDB:ENSG00000126012"/>
<dbReference type="eggNOG" id="KOG1246">
    <property type="taxonomic scope" value="Eukaryota"/>
</dbReference>
<dbReference type="GeneTree" id="ENSGT00940000161236"/>
<dbReference type="HOGENOM" id="CLU_000991_2_2_1"/>
<dbReference type="InParanoid" id="P41229"/>
<dbReference type="OMA" id="FMIRCEL"/>
<dbReference type="OrthoDB" id="1678912at2759"/>
<dbReference type="PAN-GO" id="P41229">
    <property type="GO annotations" value="3 GO annotations based on evolutionary models"/>
</dbReference>
<dbReference type="PhylomeDB" id="P41229"/>
<dbReference type="TreeFam" id="TF106476"/>
<dbReference type="BioCyc" id="MetaCyc:ENSG00000126012-MONOMER"/>
<dbReference type="BRENDA" id="1.14.11.67">
    <property type="organism ID" value="2681"/>
</dbReference>
<dbReference type="PathwayCommons" id="P41229"/>
<dbReference type="Reactome" id="R-HSA-3214842">
    <property type="pathway name" value="HDMs demethylate histones"/>
</dbReference>
<dbReference type="SignaLink" id="P41229"/>
<dbReference type="SIGNOR" id="P41229"/>
<dbReference type="BioGRID-ORCS" id="8242">
    <property type="hits" value="72 hits in 826 CRISPR screens"/>
</dbReference>
<dbReference type="ChiTaRS" id="KDM5C">
    <property type="organism name" value="human"/>
</dbReference>
<dbReference type="EvolutionaryTrace" id="P41229"/>
<dbReference type="GeneWiki" id="JARID1C"/>
<dbReference type="GenomeRNAi" id="8242"/>
<dbReference type="Pharos" id="P41229">
    <property type="development level" value="Tchem"/>
</dbReference>
<dbReference type="PRO" id="PR:P41229"/>
<dbReference type="Proteomes" id="UP000005640">
    <property type="component" value="Chromosome X"/>
</dbReference>
<dbReference type="RNAct" id="P41229">
    <property type="molecule type" value="protein"/>
</dbReference>
<dbReference type="Bgee" id="ENSG00000126012">
    <property type="expression patterns" value="Expressed in sural nerve and 198 other cell types or tissues"/>
</dbReference>
<dbReference type="ExpressionAtlas" id="P41229">
    <property type="expression patterns" value="baseline and differential"/>
</dbReference>
<dbReference type="GO" id="GO:0000785">
    <property type="term" value="C:chromatin"/>
    <property type="evidence" value="ECO:0000318"/>
    <property type="project" value="GO_Central"/>
</dbReference>
<dbReference type="GO" id="GO:0005829">
    <property type="term" value="C:cytosol"/>
    <property type="evidence" value="ECO:0000314"/>
    <property type="project" value="HPA"/>
</dbReference>
<dbReference type="GO" id="GO:0005654">
    <property type="term" value="C:nucleoplasm"/>
    <property type="evidence" value="ECO:0000314"/>
    <property type="project" value="HPA"/>
</dbReference>
<dbReference type="GO" id="GO:0005634">
    <property type="term" value="C:nucleus"/>
    <property type="evidence" value="ECO:0000314"/>
    <property type="project" value="MGI"/>
</dbReference>
<dbReference type="GO" id="GO:0003677">
    <property type="term" value="F:DNA binding"/>
    <property type="evidence" value="ECO:0007669"/>
    <property type="project" value="InterPro"/>
</dbReference>
<dbReference type="GO" id="GO:0032452">
    <property type="term" value="F:histone demethylase activity"/>
    <property type="evidence" value="ECO:0000304"/>
    <property type="project" value="Reactome"/>
</dbReference>
<dbReference type="GO" id="GO:0032453">
    <property type="term" value="F:histone H3K4 demethylase activity"/>
    <property type="evidence" value="ECO:0000314"/>
    <property type="project" value="MGI"/>
</dbReference>
<dbReference type="GO" id="GO:0034647">
    <property type="term" value="F:histone H3K4me/H3K4me2/H3K4me3 demethylase activity"/>
    <property type="evidence" value="ECO:0000318"/>
    <property type="project" value="GO_Central"/>
</dbReference>
<dbReference type="GO" id="GO:0008270">
    <property type="term" value="F:zinc ion binding"/>
    <property type="evidence" value="ECO:0000314"/>
    <property type="project" value="UniProtKB"/>
</dbReference>
<dbReference type="GO" id="GO:0006338">
    <property type="term" value="P:chromatin remodeling"/>
    <property type="evidence" value="ECO:0000318"/>
    <property type="project" value="GO_Central"/>
</dbReference>
<dbReference type="GO" id="GO:0045892">
    <property type="term" value="P:negative regulation of DNA-templated transcription"/>
    <property type="evidence" value="ECO:0000250"/>
    <property type="project" value="UniProtKB"/>
</dbReference>
<dbReference type="GO" id="GO:0006355">
    <property type="term" value="P:regulation of DNA-templated transcription"/>
    <property type="evidence" value="ECO:0000318"/>
    <property type="project" value="GO_Central"/>
</dbReference>
<dbReference type="GO" id="GO:0048511">
    <property type="term" value="P:rhythmic process"/>
    <property type="evidence" value="ECO:0007669"/>
    <property type="project" value="UniProtKB-KW"/>
</dbReference>
<dbReference type="CDD" id="cd16875">
    <property type="entry name" value="ARID_KDM5C_5D"/>
    <property type="match status" value="1"/>
</dbReference>
<dbReference type="CDD" id="cd15604">
    <property type="entry name" value="PHD1_KDM5C_5D"/>
    <property type="match status" value="1"/>
</dbReference>
<dbReference type="CDD" id="cd15608">
    <property type="entry name" value="PHD2_KDM5C_5D"/>
    <property type="match status" value="1"/>
</dbReference>
<dbReference type="FunFam" id="3.30.40.10:FF:000072">
    <property type="entry name" value="lysine-specific demethylase 5C isoform X2"/>
    <property type="match status" value="1"/>
</dbReference>
<dbReference type="FunFam" id="2.60.120.650:FF:000041">
    <property type="entry name" value="lysine-specific demethylase 5C isoform X6"/>
    <property type="match status" value="1"/>
</dbReference>
<dbReference type="FunFam" id="3.30.40.10:FF:000651">
    <property type="entry name" value="Lysine-specific demethylase 5D"/>
    <property type="match status" value="1"/>
</dbReference>
<dbReference type="FunFam" id="1.10.150.60:FF:000001">
    <property type="entry name" value="Putative lysine-specific demethylase 5b"/>
    <property type="match status" value="1"/>
</dbReference>
<dbReference type="FunFam" id="2.60.120.650:FF:000001">
    <property type="entry name" value="Putative lysine-specific demethylase 5b"/>
    <property type="match status" value="1"/>
</dbReference>
<dbReference type="Gene3D" id="1.10.150.60">
    <property type="entry name" value="ARID DNA-binding domain"/>
    <property type="match status" value="1"/>
</dbReference>
<dbReference type="Gene3D" id="2.60.120.650">
    <property type="entry name" value="Cupin"/>
    <property type="match status" value="1"/>
</dbReference>
<dbReference type="Gene3D" id="3.30.40.10">
    <property type="entry name" value="Zinc/RING finger domain, C3HC4 (zinc finger)"/>
    <property type="match status" value="2"/>
</dbReference>
<dbReference type="InterPro" id="IPR001606">
    <property type="entry name" value="ARID_dom"/>
</dbReference>
<dbReference type="InterPro" id="IPR036431">
    <property type="entry name" value="ARID_dom_sf"/>
</dbReference>
<dbReference type="InterPro" id="IPR003347">
    <property type="entry name" value="JmjC_dom"/>
</dbReference>
<dbReference type="InterPro" id="IPR003349">
    <property type="entry name" value="JmjN"/>
</dbReference>
<dbReference type="InterPro" id="IPR048615">
    <property type="entry name" value="KDM5_C-hel"/>
</dbReference>
<dbReference type="InterPro" id="IPR013637">
    <property type="entry name" value="Lys_sp_deMease-like_dom"/>
</dbReference>
<dbReference type="InterPro" id="IPR019786">
    <property type="entry name" value="Zinc_finger_PHD-type_CS"/>
</dbReference>
<dbReference type="InterPro" id="IPR004198">
    <property type="entry name" value="Znf_C5HC2"/>
</dbReference>
<dbReference type="InterPro" id="IPR011011">
    <property type="entry name" value="Znf_FYVE_PHD"/>
</dbReference>
<dbReference type="InterPro" id="IPR001965">
    <property type="entry name" value="Znf_PHD"/>
</dbReference>
<dbReference type="InterPro" id="IPR019787">
    <property type="entry name" value="Znf_PHD-finger"/>
</dbReference>
<dbReference type="InterPro" id="IPR013083">
    <property type="entry name" value="Znf_RING/FYVE/PHD"/>
</dbReference>
<dbReference type="PANTHER" id="PTHR10694">
    <property type="entry name" value="LYSINE-SPECIFIC DEMETHYLASE"/>
    <property type="match status" value="1"/>
</dbReference>
<dbReference type="PANTHER" id="PTHR10694:SF43">
    <property type="entry name" value="LYSINE-SPECIFIC DEMETHYLASE 5C"/>
    <property type="match status" value="1"/>
</dbReference>
<dbReference type="Pfam" id="PF01388">
    <property type="entry name" value="ARID"/>
    <property type="match status" value="1"/>
</dbReference>
<dbReference type="Pfam" id="PF02373">
    <property type="entry name" value="JmjC"/>
    <property type="match status" value="1"/>
</dbReference>
<dbReference type="Pfam" id="PF02375">
    <property type="entry name" value="JmjN"/>
    <property type="match status" value="1"/>
</dbReference>
<dbReference type="Pfam" id="PF21323">
    <property type="entry name" value="KDM5_C-hel"/>
    <property type="match status" value="1"/>
</dbReference>
<dbReference type="Pfam" id="PF00628">
    <property type="entry name" value="PHD"/>
    <property type="match status" value="1"/>
</dbReference>
<dbReference type="Pfam" id="PF08429">
    <property type="entry name" value="PLU-1"/>
    <property type="match status" value="1"/>
</dbReference>
<dbReference type="Pfam" id="PF02928">
    <property type="entry name" value="zf-C5HC2"/>
    <property type="match status" value="1"/>
</dbReference>
<dbReference type="SMART" id="SM01014">
    <property type="entry name" value="ARID"/>
    <property type="match status" value="1"/>
</dbReference>
<dbReference type="SMART" id="SM00501">
    <property type="entry name" value="BRIGHT"/>
    <property type="match status" value="1"/>
</dbReference>
<dbReference type="SMART" id="SM00558">
    <property type="entry name" value="JmjC"/>
    <property type="match status" value="1"/>
</dbReference>
<dbReference type="SMART" id="SM00545">
    <property type="entry name" value="JmjN"/>
    <property type="match status" value="1"/>
</dbReference>
<dbReference type="SMART" id="SM00249">
    <property type="entry name" value="PHD"/>
    <property type="match status" value="2"/>
</dbReference>
<dbReference type="SUPFAM" id="SSF46774">
    <property type="entry name" value="ARID-like"/>
    <property type="match status" value="1"/>
</dbReference>
<dbReference type="SUPFAM" id="SSF51197">
    <property type="entry name" value="Clavaminate synthase-like"/>
    <property type="match status" value="1"/>
</dbReference>
<dbReference type="SUPFAM" id="SSF57903">
    <property type="entry name" value="FYVE/PHD zinc finger"/>
    <property type="match status" value="2"/>
</dbReference>
<dbReference type="PROSITE" id="PS51011">
    <property type="entry name" value="ARID"/>
    <property type="match status" value="1"/>
</dbReference>
<dbReference type="PROSITE" id="PS51184">
    <property type="entry name" value="JMJC"/>
    <property type="match status" value="1"/>
</dbReference>
<dbReference type="PROSITE" id="PS51183">
    <property type="entry name" value="JMJN"/>
    <property type="match status" value="1"/>
</dbReference>
<dbReference type="PROSITE" id="PS01359">
    <property type="entry name" value="ZF_PHD_1"/>
    <property type="match status" value="2"/>
</dbReference>
<dbReference type="PROSITE" id="PS50016">
    <property type="entry name" value="ZF_PHD_2"/>
    <property type="match status" value="1"/>
</dbReference>
<feature type="chain" id="PRO_0000200586" description="Lysine-specific demethylase 5C">
    <location>
        <begin position="1"/>
        <end position="1560"/>
    </location>
</feature>
<feature type="domain" description="JmjN" evidence="5">
    <location>
        <begin position="14"/>
        <end position="55"/>
    </location>
</feature>
<feature type="domain" description="ARID" evidence="4">
    <location>
        <begin position="79"/>
        <end position="169"/>
    </location>
</feature>
<feature type="domain" description="JmjC" evidence="6">
    <location>
        <begin position="468"/>
        <end position="634"/>
    </location>
</feature>
<feature type="zinc finger region" description="PHD-type 1" evidence="3">
    <location>
        <begin position="326"/>
        <end position="372"/>
    </location>
</feature>
<feature type="zinc finger region" description="C5HC2" evidence="18">
    <location>
        <begin position="707"/>
        <end position="759"/>
    </location>
</feature>
<feature type="zinc finger region" description="PHD-type 2" evidence="3">
    <location>
        <begin position="1187"/>
        <end position="1248"/>
    </location>
</feature>
<feature type="region of interest" description="Disordered" evidence="7">
    <location>
        <begin position="197"/>
        <end position="227"/>
    </location>
</feature>
<feature type="region of interest" description="Disordered" evidence="7">
    <location>
        <begin position="1161"/>
        <end position="1181"/>
    </location>
</feature>
<feature type="region of interest" description="Disordered" evidence="7">
    <location>
        <begin position="1316"/>
        <end position="1371"/>
    </location>
</feature>
<feature type="region of interest" description="Disordered" evidence="7">
    <location>
        <begin position="1444"/>
        <end position="1560"/>
    </location>
</feature>
<feature type="compositionally biased region" description="Polar residues" evidence="7">
    <location>
        <begin position="197"/>
        <end position="207"/>
    </location>
</feature>
<feature type="compositionally biased region" description="Low complexity" evidence="7">
    <location>
        <begin position="1169"/>
        <end position="1181"/>
    </location>
</feature>
<feature type="compositionally biased region" description="Basic and acidic residues" evidence="7">
    <location>
        <begin position="1335"/>
        <end position="1345"/>
    </location>
</feature>
<feature type="compositionally biased region" description="Basic residues" evidence="7">
    <location>
        <begin position="1448"/>
        <end position="1463"/>
    </location>
</feature>
<feature type="compositionally biased region" description="Basic and acidic residues" evidence="7">
    <location>
        <begin position="1464"/>
        <end position="1481"/>
    </location>
</feature>
<feature type="compositionally biased region" description="Acidic residues" evidence="7">
    <location>
        <begin position="1488"/>
        <end position="1503"/>
    </location>
</feature>
<feature type="compositionally biased region" description="Polar residues" evidence="7">
    <location>
        <begin position="1516"/>
        <end position="1544"/>
    </location>
</feature>
<feature type="binding site" evidence="1">
    <location>
        <position position="440"/>
    </location>
    <ligand>
        <name>2-oxoglutarate</name>
        <dbReference type="ChEBI" id="CHEBI:16810"/>
    </ligand>
</feature>
<feature type="binding site" evidence="25">
    <location>
        <position position="514"/>
    </location>
    <ligand>
        <name>Fe cation</name>
        <dbReference type="ChEBI" id="CHEBI:24875"/>
        <note>catalytic</note>
    </ligand>
</feature>
<feature type="binding site" evidence="25">
    <location>
        <position position="516"/>
    </location>
    <ligand>
        <name>Fe cation</name>
        <dbReference type="ChEBI" id="CHEBI:24875"/>
        <note>catalytic</note>
    </ligand>
</feature>
<feature type="binding site" evidence="1">
    <location>
        <position position="522"/>
    </location>
    <ligand>
        <name>2-oxoglutarate</name>
        <dbReference type="ChEBI" id="CHEBI:16810"/>
    </ligand>
</feature>
<feature type="binding site" evidence="1">
    <location>
        <position position="524"/>
    </location>
    <ligand>
        <name>2-oxoglutarate</name>
        <dbReference type="ChEBI" id="CHEBI:16810"/>
    </ligand>
</feature>
<feature type="binding site" evidence="1">
    <location>
        <position position="532"/>
    </location>
    <ligand>
        <name>2-oxoglutarate</name>
        <dbReference type="ChEBI" id="CHEBI:16810"/>
    </ligand>
</feature>
<feature type="binding site" evidence="25">
    <location>
        <position position="602"/>
    </location>
    <ligand>
        <name>Fe cation</name>
        <dbReference type="ChEBI" id="CHEBI:24875"/>
        <note>catalytic</note>
    </ligand>
</feature>
<feature type="modified residue" description="Phosphoserine" evidence="32">
    <location>
        <position position="287"/>
    </location>
</feature>
<feature type="modified residue" description="Phosphoserine" evidence="32">
    <location>
        <position position="301"/>
    </location>
</feature>
<feature type="modified residue" description="Phosphoserine" evidence="28 32">
    <location>
        <position position="317"/>
    </location>
</feature>
<feature type="modified residue" description="Phosphoserine" evidence="2">
    <location>
        <position position="893"/>
    </location>
</feature>
<feature type="modified residue" description="Phosphoserine" evidence="32">
    <location>
        <position position="897"/>
    </location>
</feature>
<feature type="modified residue" description="Phosphoserine" evidence="27 29 30 31 32">
    <location>
        <position position="1359"/>
    </location>
</feature>
<feature type="cross-link" description="Glycyl lysine isopeptide (Lys-Gly) (interchain with G-Cter in SUMO2)" evidence="33">
    <location>
        <position position="205"/>
    </location>
</feature>
<feature type="cross-link" description="Glycyl lysine isopeptide (Lys-Gly) (interchain with G-Cter in SUMO2)" evidence="33">
    <location>
        <position position="229"/>
    </location>
</feature>
<feature type="cross-link" description="Glycyl lysine isopeptide (Lys-Gly) (interchain with G-Cter in SUMO2)" evidence="33">
    <location>
        <position position="244"/>
    </location>
</feature>
<feature type="cross-link" description="Glycyl lysine isopeptide (Lys-Gly) (interchain with G-Cter in SUMO2)" evidence="33">
    <location>
        <position position="274"/>
    </location>
</feature>
<feature type="cross-link" description="Glycyl lysine isopeptide (Lys-Gly) (interchain with G-Cter in SUMO2)" evidence="33">
    <location>
        <position position="295"/>
    </location>
</feature>
<feature type="cross-link" description="Glycyl lysine isopeptide (Lys-Gly) (interchain with G-Cter in SUMO2)" evidence="33">
    <location>
        <position position="1127"/>
    </location>
</feature>
<feature type="splice variant" id="VSP_043752" description="In isoform 4." evidence="21">
    <location>
        <begin position="51"/>
        <end position="76"/>
    </location>
</feature>
<feature type="splice variant" id="VSP_026410" description="In isoform 3 and isoform 4." evidence="21">
    <location>
        <begin position="77"/>
        <end position="117"/>
    </location>
</feature>
<feature type="splice variant" id="VSP_053420" description="In isoform 5." evidence="22">
    <location>
        <position position="175"/>
    </location>
</feature>
<feature type="splice variant" id="VSP_000315" description="In isoform 2, isoform 3 and isoform 4." evidence="21">
    <location>
        <begin position="1370"/>
        <end position="1372"/>
    </location>
</feature>
<feature type="splice variant" id="VSP_043753" description="In isoform 4." evidence="21">
    <original>WQLLQAGQPPDLERIRTLLELEKAERHGSRARGRALERRRRRKVDRGGEGDDPAREELEPKRVRSSGPEAEEVQEEEELEEETGGEGPPAPIPTTGSPSTQENQNGLEPAEGTTSGPSAPFSTLTPRLHLPCPQQPPQQQL</original>
    <variation>PESLDFCILTPRYCSDLSSWGPAPGVFPPW</variation>
    <location>
        <begin position="1420"/>
        <end position="1560"/>
    </location>
</feature>
<feature type="sequence variant" id="VAR_032986" description="In MRXSCJ; no effect on subcellular location and enzymatic activity." evidence="10 13">
    <original>D</original>
    <variation>G</variation>
    <location>
        <position position="87"/>
    </location>
</feature>
<feature type="sequence variant" id="VAR_022730" description="In MRXSCJ; impairs enzymatic activity and binding to H3-K9Me3; dbSNP:rs199422235." evidence="8 11">
    <original>A</original>
    <variation>P</variation>
    <location>
        <position position="388"/>
    </location>
</feature>
<feature type="sequence variant" id="VAR_022731" description="In MRXSCJ; decreases enzymatic activity." evidence="8 13 16">
    <original>D</original>
    <variation>Y</variation>
    <location>
        <position position="402"/>
    </location>
</feature>
<feature type="sequence variant" id="VAR_032987" description="In MRXSCJ; dbSNP:rs199422237." evidence="9">
    <original>S</original>
    <variation>R</variation>
    <location>
        <position position="451"/>
    </location>
</feature>
<feature type="sequence variant" id="VAR_074308" description="In MRXSCJ; patient fibroblasts show decreased enzymatic activity; dbSNP:rs1057518697." evidence="15 16">
    <original>P</original>
    <variation>L</variation>
    <location>
        <position position="480"/>
    </location>
</feature>
<feature type="sequence variant" id="VAR_065091" description="De novo mutation found in a patient with intellectual disability." evidence="14">
    <original>C</original>
    <variation>Y</variation>
    <location>
        <position position="640"/>
    </location>
</feature>
<feature type="sequence variant" id="VAR_032988" description="In MRXSCJ; impairs enzymatic activity." evidence="10 11">
    <original>F</original>
    <variation>L</variation>
    <location>
        <position position="642"/>
    </location>
</feature>
<feature type="sequence variant" id="VAR_022732" description="In MRXSCJ; dbSNP:rs1057517955." evidence="8">
    <original>E</original>
    <variation>K</variation>
    <location>
        <position position="698"/>
    </location>
</feature>
<feature type="sequence variant" id="VAR_022733" description="In MRXSCJ; impairs enzymatic activity; dbSNP:rs199422234." evidence="8 11">
    <original>L</original>
    <variation>F</variation>
    <location>
        <position position="731"/>
    </location>
</feature>
<feature type="sequence variant" id="VAR_032989" description="In MRXSCJ; dbSNP:rs2146851322." evidence="10">
    <original>R</original>
    <variation>W</variation>
    <location>
        <position position="750"/>
    </location>
</feature>
<feature type="sequence variant" id="VAR_032990" description="In MRXSCJ; impairs enzymatic activity." evidence="10 11 13">
    <original>Y</original>
    <variation>C</variation>
    <location>
        <position position="751"/>
    </location>
</feature>
<feature type="mutagenesis site" description="Abolishes lysine-specific histone demethylase activity." evidence="19">
    <original>HIE</original>
    <variation>AIA</variation>
    <location>
        <begin position="514"/>
        <end position="516"/>
    </location>
</feature>
<feature type="mutagenesis site" description="Abolishes lysine-specific histone demethylase activity." evidence="11 13">
    <original>H</original>
    <variation>A</variation>
    <location>
        <position position="514"/>
    </location>
</feature>
<feature type="sequence conflict" description="In Ref. 2; BAG65494." evidence="24" ref="2">
    <original>V</original>
    <variation>L</variation>
    <location>
        <position position="16"/>
    </location>
</feature>
<feature type="sequence conflict" description="In Ref. 2; BAG65494." evidence="24" ref="2">
    <original>E</original>
    <variation>G</variation>
    <location>
        <position position="23"/>
    </location>
</feature>
<feature type="sequence conflict" description="In Ref. 6; CAA82758." evidence="24" ref="6">
    <original>C</original>
    <variation>Y</variation>
    <location>
        <position position="342"/>
    </location>
</feature>
<feature type="sequence conflict" description="In Ref. 1; AAA61302." evidence="24" ref="1">
    <original>A</original>
    <variation>R</variation>
    <location>
        <position position="1199"/>
    </location>
</feature>
<feature type="sequence conflict" description="In Ref. 2; BAG65494." evidence="24" ref="2">
    <original>I</original>
    <variation>T</variation>
    <location>
        <position position="1419"/>
    </location>
</feature>
<feature type="helix" evidence="34">
    <location>
        <begin position="73"/>
        <end position="76"/>
    </location>
</feature>
<feature type="turn" evidence="34">
    <location>
        <begin position="79"/>
        <end position="81"/>
    </location>
</feature>
<feature type="helix" evidence="34">
    <location>
        <begin position="82"/>
        <end position="94"/>
    </location>
</feature>
<feature type="turn" evidence="34">
    <location>
        <begin position="95"/>
        <end position="97"/>
    </location>
</feature>
<feature type="helix" evidence="34">
    <location>
        <begin position="112"/>
        <end position="122"/>
    </location>
</feature>
<feature type="helix" evidence="34">
    <location>
        <begin position="125"/>
        <end position="130"/>
    </location>
</feature>
<feature type="turn" evidence="34">
    <location>
        <begin position="131"/>
        <end position="133"/>
    </location>
</feature>
<feature type="helix" evidence="34">
    <location>
        <begin position="134"/>
        <end position="140"/>
    </location>
</feature>
<feature type="helix" evidence="34">
    <location>
        <begin position="149"/>
        <end position="159"/>
    </location>
</feature>
<feature type="helix" evidence="34">
    <location>
        <begin position="162"/>
        <end position="172"/>
    </location>
</feature>
<feature type="turn" evidence="34">
    <location>
        <begin position="178"/>
        <end position="180"/>
    </location>
</feature>
<feature type="helix" evidence="34">
    <location>
        <begin position="181"/>
        <end position="185"/>
    </location>
</feature>
<feature type="helix" evidence="35">
    <location>
        <begin position="394"/>
        <end position="409"/>
    </location>
</feature>
<feature type="helix" evidence="35">
    <location>
        <begin position="418"/>
        <end position="429"/>
    </location>
</feature>
<feature type="strand" evidence="35">
    <location>
        <begin position="437"/>
        <end position="445"/>
    </location>
</feature>
<feature type="helix" evidence="35">
    <location>
        <begin position="446"/>
        <end position="449"/>
    </location>
</feature>
<feature type="helix" evidence="35">
    <location>
        <begin position="464"/>
        <end position="471"/>
    </location>
</feature>
<feature type="turn" evidence="35">
    <location>
        <begin position="476"/>
        <end position="478"/>
    </location>
</feature>
<feature type="helix" evidence="35">
    <location>
        <begin position="479"/>
        <end position="481"/>
    </location>
</feature>
<feature type="helix" evidence="35">
    <location>
        <begin position="486"/>
        <end position="489"/>
    </location>
</feature>
<feature type="turn" evidence="35">
    <location>
        <begin position="495"/>
        <end position="497"/>
    </location>
</feature>
<feature type="strand" evidence="35">
    <location>
        <begin position="501"/>
        <end position="505"/>
    </location>
</feature>
<feature type="strand" evidence="35">
    <location>
        <begin position="510"/>
        <end position="514"/>
    </location>
</feature>
<feature type="helix" evidence="35">
    <location>
        <begin position="517"/>
        <end position="519"/>
    </location>
</feature>
<feature type="strand" evidence="35">
    <location>
        <begin position="521"/>
        <end position="530"/>
    </location>
</feature>
<feature type="strand" evidence="35">
    <location>
        <begin position="532"/>
        <end position="536"/>
    </location>
</feature>
<feature type="helix" evidence="35">
    <location>
        <begin position="539"/>
        <end position="541"/>
    </location>
</feature>
<feature type="helix" evidence="35">
    <location>
        <begin position="542"/>
        <end position="552"/>
    </location>
</feature>
<feature type="helix" evidence="35">
    <location>
        <begin position="573"/>
        <end position="577"/>
    </location>
</feature>
<feature type="turn" evidence="35">
    <location>
        <begin position="578"/>
        <end position="580"/>
    </location>
</feature>
<feature type="strand" evidence="35">
    <location>
        <begin position="584"/>
        <end position="588"/>
    </location>
</feature>
<feature type="strand" evidence="35">
    <location>
        <begin position="593"/>
        <end position="596"/>
    </location>
</feature>
<feature type="strand" evidence="35">
    <location>
        <begin position="602"/>
        <end position="617"/>
    </location>
</feature>
<feature type="helix" evidence="35">
    <location>
        <begin position="620"/>
        <end position="622"/>
    </location>
</feature>
<feature type="helix" evidence="35">
    <location>
        <begin position="623"/>
        <end position="636"/>
    </location>
</feature>
<feature type="helix" evidence="35">
    <location>
        <begin position="644"/>
        <end position="652"/>
    </location>
</feature>
<feature type="helix" evidence="35">
    <location>
        <begin position="655"/>
        <end position="657"/>
    </location>
</feature>
<feature type="helix" evidence="35">
    <location>
        <begin position="660"/>
        <end position="687"/>
    </location>
</feature>
<feature type="strand" evidence="35">
    <location>
        <begin position="692"/>
        <end position="694"/>
    </location>
</feature>
<feature type="helix" evidence="35">
    <location>
        <begin position="697"/>
        <end position="699"/>
    </location>
</feature>
<feature type="helix" evidence="35">
    <location>
        <begin position="702"/>
        <end position="704"/>
    </location>
</feature>
<feature type="turn" evidence="35">
    <location>
        <begin position="708"/>
        <end position="710"/>
    </location>
</feature>
<feature type="strand" evidence="35">
    <location>
        <begin position="716"/>
        <end position="723"/>
    </location>
</feature>
<feature type="helix" evidence="35">
    <location>
        <begin position="731"/>
        <end position="733"/>
    </location>
</feature>
<feature type="helix" evidence="35">
    <location>
        <begin position="742"/>
        <end position="744"/>
    </location>
</feature>
<feature type="strand" evidence="35">
    <location>
        <begin position="745"/>
        <end position="751"/>
    </location>
</feature>
<feature type="helix" evidence="35">
    <location>
        <begin position="755"/>
        <end position="767"/>
    </location>
</feature>